<proteinExistence type="inferred from homology"/>
<dbReference type="EC" id="2.4.1.-"/>
<dbReference type="EMBL" id="L18897">
    <property type="protein sequence ID" value="AAB51169.1"/>
    <property type="molecule type" value="Genomic_DNA"/>
</dbReference>
<dbReference type="EMBL" id="AP009384">
    <property type="protein sequence ID" value="BAF89809.1"/>
    <property type="molecule type" value="Genomic_DNA"/>
</dbReference>
<dbReference type="RefSeq" id="WP_012172334.1">
    <property type="nucleotide sequence ID" value="NC_009937.1"/>
</dbReference>
<dbReference type="SMR" id="Q43966"/>
<dbReference type="STRING" id="438753.AZC_3811"/>
<dbReference type="CAZy" id="GT23">
    <property type="family name" value="Glycosyltransferase Family 23"/>
</dbReference>
<dbReference type="KEGG" id="azc:AZC_3811"/>
<dbReference type="eggNOG" id="ENOG503190F">
    <property type="taxonomic scope" value="Bacteria"/>
</dbReference>
<dbReference type="HOGENOM" id="CLU_846979_0_0_5"/>
<dbReference type="BRENDA" id="2.4.1.68">
    <property type="organism ID" value="609"/>
</dbReference>
<dbReference type="Proteomes" id="UP000000270">
    <property type="component" value="Chromosome"/>
</dbReference>
<dbReference type="GO" id="GO:0016758">
    <property type="term" value="F:hexosyltransferase activity"/>
    <property type="evidence" value="ECO:0007669"/>
    <property type="project" value="InterPro"/>
</dbReference>
<dbReference type="GO" id="GO:0009312">
    <property type="term" value="P:oligosaccharide biosynthetic process"/>
    <property type="evidence" value="ECO:0007669"/>
    <property type="project" value="InterPro"/>
</dbReference>
<dbReference type="CDD" id="cd11548">
    <property type="entry name" value="NodZ_like"/>
    <property type="match status" value="1"/>
</dbReference>
<dbReference type="Gene3D" id="3.40.50.11340">
    <property type="match status" value="1"/>
</dbReference>
<dbReference type="Gene3D" id="3.40.50.11350">
    <property type="match status" value="1"/>
</dbReference>
<dbReference type="InterPro" id="IPR027350">
    <property type="entry name" value="GT23_dom"/>
</dbReference>
<dbReference type="InterPro" id="IPR008716">
    <property type="entry name" value="NodZ"/>
</dbReference>
<dbReference type="Pfam" id="PF05830">
    <property type="entry name" value="NodZ"/>
    <property type="match status" value="1"/>
</dbReference>
<dbReference type="PIRSF" id="PIRSF020513">
    <property type="entry name" value="6alphaFUT_NodZ"/>
    <property type="match status" value="1"/>
</dbReference>
<dbReference type="PROSITE" id="PS51659">
    <property type="entry name" value="GT23"/>
    <property type="match status" value="1"/>
</dbReference>
<evidence type="ECO:0000255" key="1">
    <source>
        <dbReference type="PROSITE-ProRule" id="PRU00992"/>
    </source>
</evidence>
<protein>
    <recommendedName>
        <fullName>Nodulation protein Z</fullName>
        <ecNumber>2.4.1.-</ecNumber>
    </recommendedName>
</protein>
<name>NODZ_AZOC5</name>
<comment type="function">
    <text>Fucosyltransferase which adds the fucose moiety of the nod factor on its terminal reducing N-acetylglucosamine end. Uses GDP-fucose as the donor group.</text>
</comment>
<comment type="similarity">
    <text evidence="1">Belongs to the glycosyltransferase 23 family.</text>
</comment>
<sequence length="328" mass="37562">MYNSACPEGRSVISRRRTGLGDCLWSLAAAWSYARHTRRSLVVDWSESCYSADPNINLFPVLFDNINDIGGVSVHYVSRTSSLALESSVIPAWWRLPVKQRGTRSDAQIFRERDELRNLFFSRRDADAAAVICDCCLMWCCDEDLEREFYDHLIVNQYVRQEVDRVYAERFLGNVVIGVHIRHGNGEDILDHDRYWCEENAAMNLVAHKIREERRKFPFRSTKIFLCTDSPAVSEWFRREMPGLFATEKEFRQRGEGELHSAHFGLGGAVAALVDMQLLSRCDVLIRYPPTSAFSRWPSLLVERVFDFDLARGVFCQADRKAGGASSG</sequence>
<organism>
    <name type="scientific">Azorhizobium caulinodans (strain ATCC 43989 / DSM 5975 / JCM 20966 / LMG 6465 / NBRC 14845 / NCIMB 13405 / ORS 571)</name>
    <dbReference type="NCBI Taxonomy" id="438753"/>
    <lineage>
        <taxon>Bacteria</taxon>
        <taxon>Pseudomonadati</taxon>
        <taxon>Pseudomonadota</taxon>
        <taxon>Alphaproteobacteria</taxon>
        <taxon>Hyphomicrobiales</taxon>
        <taxon>Xanthobacteraceae</taxon>
        <taxon>Azorhizobium</taxon>
    </lineage>
</organism>
<accession>Q43966</accession>
<accession>A8INZ3</accession>
<gene>
    <name type="primary">nodZ</name>
    <name type="ordered locus">AZC_3811</name>
</gene>
<keyword id="KW-0328">Glycosyltransferase</keyword>
<keyword id="KW-0536">Nodulation</keyword>
<keyword id="KW-1185">Reference proteome</keyword>
<keyword id="KW-0808">Transferase</keyword>
<feature type="chain" id="PRO_0000096917" description="Nodulation protein Z">
    <location>
        <begin position="1"/>
        <end position="328"/>
    </location>
</feature>
<feature type="domain" description="GT23" evidence="1">
    <location>
        <begin position="6"/>
        <end position="317"/>
    </location>
</feature>
<reference key="1">
    <citation type="submission" date="1993-06" db="EMBL/GenBank/DDBJ databases">
        <authorList>
            <person name="Mergaert P."/>
            <person name="D'Haeze W."/>
            <person name="Fernandez-Lopez M."/>
            <person name="Geelen D."/>
            <person name="Goethals K."/>
            <person name="Prome J.-C."/>
            <person name="van Montagu M."/>
            <person name="Holsters M."/>
        </authorList>
    </citation>
    <scope>NUCLEOTIDE SEQUENCE [GENOMIC DNA]</scope>
</reference>
<reference key="2">
    <citation type="submission" date="2007-04" db="EMBL/GenBank/DDBJ databases">
        <title>Complete genome sequence of the nitrogen-fixing bacterium Azorhizobium caulinodans ORS571.</title>
        <authorList>
            <person name="Lee K.B."/>
            <person name="Backer P.D."/>
            <person name="Aono T."/>
            <person name="Liu C.T."/>
            <person name="Suzuki S."/>
            <person name="Suzuki T."/>
            <person name="Kaneko T."/>
            <person name="Yamada M."/>
            <person name="Tabata S."/>
            <person name="Kupfer D.M."/>
            <person name="Najar F.Z."/>
            <person name="Wiley G.B."/>
            <person name="Roe B."/>
            <person name="Binnewies T."/>
            <person name="Ussery D."/>
            <person name="Vereecke D."/>
            <person name="Gevers D."/>
            <person name="Holsters M."/>
            <person name="Oyaizu H."/>
        </authorList>
    </citation>
    <scope>NUCLEOTIDE SEQUENCE [LARGE SCALE GENOMIC DNA]</scope>
    <source>
        <strain>ATCC 43989 / DSM 5975 / JCM 20966 / LMG 6465 / NBRC 14845 / NCIMB 13405 / ORS 571</strain>
    </source>
</reference>